<organism>
    <name type="scientific">Oryza sativa subsp. japonica</name>
    <name type="common">Rice</name>
    <dbReference type="NCBI Taxonomy" id="39947"/>
    <lineage>
        <taxon>Eukaryota</taxon>
        <taxon>Viridiplantae</taxon>
        <taxon>Streptophyta</taxon>
        <taxon>Embryophyta</taxon>
        <taxon>Tracheophyta</taxon>
        <taxon>Spermatophyta</taxon>
        <taxon>Magnoliopsida</taxon>
        <taxon>Liliopsida</taxon>
        <taxon>Poales</taxon>
        <taxon>Poaceae</taxon>
        <taxon>BOP clade</taxon>
        <taxon>Oryzoideae</taxon>
        <taxon>Oryzeae</taxon>
        <taxon>Oryzinae</taxon>
        <taxon>Oryza</taxon>
        <taxon>Oryza sativa</taxon>
    </lineage>
</organism>
<accession>Q6K5Q0</accession>
<accession>A0A0P0VJ67</accession>
<reference key="1">
    <citation type="journal article" date="2005" name="Nature">
        <title>The map-based sequence of the rice genome.</title>
        <authorList>
            <consortium name="International rice genome sequencing project (IRGSP)"/>
        </authorList>
    </citation>
    <scope>NUCLEOTIDE SEQUENCE [LARGE SCALE GENOMIC DNA]</scope>
    <source>
        <strain>cv. Nipponbare</strain>
    </source>
</reference>
<reference key="2">
    <citation type="journal article" date="2008" name="Nucleic Acids Res.">
        <title>The rice annotation project database (RAP-DB): 2008 update.</title>
        <authorList>
            <consortium name="The rice annotation project (RAP)"/>
        </authorList>
    </citation>
    <scope>GENOME REANNOTATION</scope>
    <source>
        <strain>cv. Nipponbare</strain>
    </source>
</reference>
<reference key="3">
    <citation type="journal article" date="2013" name="Rice">
        <title>Improvement of the Oryza sativa Nipponbare reference genome using next generation sequence and optical map data.</title>
        <authorList>
            <person name="Kawahara Y."/>
            <person name="de la Bastide M."/>
            <person name="Hamilton J.P."/>
            <person name="Kanamori H."/>
            <person name="McCombie W.R."/>
            <person name="Ouyang S."/>
            <person name="Schwartz D.C."/>
            <person name="Tanaka T."/>
            <person name="Wu J."/>
            <person name="Zhou S."/>
            <person name="Childs K.L."/>
            <person name="Davidson R.M."/>
            <person name="Lin H."/>
            <person name="Quesada-Ocampo L."/>
            <person name="Vaillancourt B."/>
            <person name="Sakai H."/>
            <person name="Lee S.S."/>
            <person name="Kim J."/>
            <person name="Numa H."/>
            <person name="Itoh T."/>
            <person name="Buell C.R."/>
            <person name="Matsumoto T."/>
        </authorList>
    </citation>
    <scope>GENOME REANNOTATION</scope>
    <source>
        <strain>cv. Nipponbare</strain>
    </source>
</reference>
<gene>
    <name type="ordered locus">Os02g0491600</name>
    <name type="ordered locus">LOC_Os02g29000</name>
    <name type="ORF">OSJNBa0048K16.34</name>
    <name type="ORF">P0579G08.10</name>
</gene>
<comment type="function">
    <text>May play a role in plant defense. Probably has no oxalate oxidase activity even if the active site is conserved.</text>
</comment>
<comment type="subunit">
    <text evidence="1">Oligomer (believed to be a pentamer but probably hexamer).</text>
</comment>
<comment type="subcellular location">
    <subcellularLocation>
        <location evidence="1">Secreted</location>
        <location evidence="1">Extracellular space</location>
        <location evidence="1">Apoplast</location>
    </subcellularLocation>
</comment>
<comment type="similarity">
    <text evidence="3">Belongs to the germin family.</text>
</comment>
<evidence type="ECO:0000250" key="1"/>
<evidence type="ECO:0000255" key="2"/>
<evidence type="ECO:0000305" key="3"/>
<protein>
    <recommendedName>
        <fullName>Putative germin-like protein 2-1</fullName>
    </recommendedName>
</protein>
<keyword id="KW-0052">Apoplast</keyword>
<keyword id="KW-1015">Disulfide bond</keyword>
<keyword id="KW-0325">Glycoprotein</keyword>
<keyword id="KW-0464">Manganese</keyword>
<keyword id="KW-0479">Metal-binding</keyword>
<keyword id="KW-1185">Reference proteome</keyword>
<keyword id="KW-0964">Secreted</keyword>
<keyword id="KW-0732">Signal</keyword>
<sequence length="216" mass="23264">MASTWFFLLALLAVSISNAFASDPSQLQDFCVADKMSQVLVNGFACKDPAAITVEDFFFSGLHMAGNTSNRQGSAVTGVNVAQISGLNTLGISLARVDYAPYGLNPPHIHPRATEILTILEGSLYVGFVTSNPENKLFTKVLNKGDVFVFPQGLIHFQFNYGTKDVIALAALSSQNPGVITIANAVFGSKPFISDDILAKAFQVEKKIVDRIQAQF</sequence>
<name>GL21_ORYSJ</name>
<feature type="signal peptide" evidence="2">
    <location>
        <begin position="1"/>
        <end position="21"/>
    </location>
</feature>
<feature type="chain" id="PRO_0000365498" description="Putative germin-like protein 2-1">
    <location>
        <begin position="22"/>
        <end position="216"/>
    </location>
</feature>
<feature type="domain" description="Cupin type-1" evidence="2">
    <location>
        <begin position="60"/>
        <end position="210"/>
    </location>
</feature>
<feature type="binding site" evidence="1">
    <location>
        <position position="108"/>
    </location>
    <ligand>
        <name>Mn(2+)</name>
        <dbReference type="ChEBI" id="CHEBI:29035"/>
    </ligand>
</feature>
<feature type="binding site" evidence="1">
    <location>
        <position position="110"/>
    </location>
    <ligand>
        <name>Mn(2+)</name>
        <dbReference type="ChEBI" id="CHEBI:29035"/>
    </ligand>
</feature>
<feature type="binding site" evidence="1">
    <location>
        <position position="115"/>
    </location>
    <ligand>
        <name>Mn(2+)</name>
        <dbReference type="ChEBI" id="CHEBI:29035"/>
    </ligand>
</feature>
<feature type="binding site" evidence="1">
    <location>
        <position position="156"/>
    </location>
    <ligand>
        <name>Mn(2+)</name>
        <dbReference type="ChEBI" id="CHEBI:29035"/>
    </ligand>
</feature>
<feature type="glycosylation site" description="N-linked (GlcNAc...) asparagine" evidence="2">
    <location>
        <position position="67"/>
    </location>
</feature>
<feature type="disulfide bond" evidence="1">
    <location>
        <begin position="31"/>
        <end position="46"/>
    </location>
</feature>
<proteinExistence type="inferred from homology"/>
<dbReference type="EMBL" id="AP004864">
    <property type="protein sequence ID" value="BAD21898.1"/>
    <property type="molecule type" value="Genomic_DNA"/>
</dbReference>
<dbReference type="EMBL" id="AP005317">
    <property type="protein sequence ID" value="BAD22075.1"/>
    <property type="molecule type" value="Genomic_DNA"/>
</dbReference>
<dbReference type="EMBL" id="AP008208">
    <property type="protein sequence ID" value="BAF08788.1"/>
    <property type="molecule type" value="Genomic_DNA"/>
</dbReference>
<dbReference type="EMBL" id="AP014958">
    <property type="protein sequence ID" value="BAS78742.1"/>
    <property type="molecule type" value="Genomic_DNA"/>
</dbReference>
<dbReference type="RefSeq" id="XP_015624078.1">
    <property type="nucleotide sequence ID" value="XM_015768592.1"/>
</dbReference>
<dbReference type="SMR" id="Q6K5Q0"/>
<dbReference type="FunCoup" id="Q6K5Q0">
    <property type="interactions" value="44"/>
</dbReference>
<dbReference type="STRING" id="39947.Q6K5Q0"/>
<dbReference type="PaxDb" id="39947-Q6K5Q0"/>
<dbReference type="EnsemblPlants" id="Os02t0491600-00">
    <property type="protein sequence ID" value="Os02t0491600-00"/>
    <property type="gene ID" value="Os02g0491600"/>
</dbReference>
<dbReference type="Gramene" id="Os02t0491600-00">
    <property type="protein sequence ID" value="Os02t0491600-00"/>
    <property type="gene ID" value="Os02g0491600"/>
</dbReference>
<dbReference type="KEGG" id="dosa:Os02g0491600"/>
<dbReference type="eggNOG" id="ENOG502QQ4A">
    <property type="taxonomic scope" value="Eukaryota"/>
</dbReference>
<dbReference type="HOGENOM" id="CLU_015790_0_0_1"/>
<dbReference type="InParanoid" id="Q6K5Q0"/>
<dbReference type="OMA" id="IIANDVF"/>
<dbReference type="OrthoDB" id="589868at2759"/>
<dbReference type="Proteomes" id="UP000000763">
    <property type="component" value="Chromosome 2"/>
</dbReference>
<dbReference type="Proteomes" id="UP000059680">
    <property type="component" value="Chromosome 2"/>
</dbReference>
<dbReference type="GO" id="GO:0048046">
    <property type="term" value="C:apoplast"/>
    <property type="evidence" value="ECO:0007669"/>
    <property type="project" value="UniProtKB-SubCell"/>
</dbReference>
<dbReference type="GO" id="GO:0030145">
    <property type="term" value="F:manganese ion binding"/>
    <property type="evidence" value="ECO:0007669"/>
    <property type="project" value="InterPro"/>
</dbReference>
<dbReference type="CDD" id="cd02241">
    <property type="entry name" value="cupin_OxOx"/>
    <property type="match status" value="1"/>
</dbReference>
<dbReference type="FunFam" id="2.60.120.10:FF:000005">
    <property type="entry name" value="Germin-like protein subfamily 1 member 8"/>
    <property type="match status" value="1"/>
</dbReference>
<dbReference type="Gene3D" id="2.60.120.10">
    <property type="entry name" value="Jelly Rolls"/>
    <property type="match status" value="1"/>
</dbReference>
<dbReference type="InterPro" id="IPR006045">
    <property type="entry name" value="Cupin_1"/>
</dbReference>
<dbReference type="InterPro" id="IPR001929">
    <property type="entry name" value="Germin"/>
</dbReference>
<dbReference type="InterPro" id="IPR019780">
    <property type="entry name" value="Germin_Mn-BS"/>
</dbReference>
<dbReference type="InterPro" id="IPR014710">
    <property type="entry name" value="RmlC-like_jellyroll"/>
</dbReference>
<dbReference type="InterPro" id="IPR011051">
    <property type="entry name" value="RmlC_Cupin_sf"/>
</dbReference>
<dbReference type="PANTHER" id="PTHR31238">
    <property type="entry name" value="GERMIN-LIKE PROTEIN SUBFAMILY 3 MEMBER 3"/>
    <property type="match status" value="1"/>
</dbReference>
<dbReference type="Pfam" id="PF00190">
    <property type="entry name" value="Cupin_1"/>
    <property type="match status" value="1"/>
</dbReference>
<dbReference type="PRINTS" id="PR00325">
    <property type="entry name" value="GERMIN"/>
</dbReference>
<dbReference type="SMART" id="SM00835">
    <property type="entry name" value="Cupin_1"/>
    <property type="match status" value="1"/>
</dbReference>
<dbReference type="SUPFAM" id="SSF51182">
    <property type="entry name" value="RmlC-like cupins"/>
    <property type="match status" value="1"/>
</dbReference>
<dbReference type="PROSITE" id="PS00725">
    <property type="entry name" value="GERMIN"/>
    <property type="match status" value="1"/>
</dbReference>